<reference key="1">
    <citation type="journal article" date="2006" name="Proc. Natl. Acad. Sci. U.S.A.">
        <title>Identification of genes subject to positive selection in uropathogenic strains of Escherichia coli: a comparative genomics approach.</title>
        <authorList>
            <person name="Chen S.L."/>
            <person name="Hung C.-S."/>
            <person name="Xu J."/>
            <person name="Reigstad C.S."/>
            <person name="Magrini V."/>
            <person name="Sabo A."/>
            <person name="Blasiar D."/>
            <person name="Bieri T."/>
            <person name="Meyer R.R."/>
            <person name="Ozersky P."/>
            <person name="Armstrong J.R."/>
            <person name="Fulton R.S."/>
            <person name="Latreille J.P."/>
            <person name="Spieth J."/>
            <person name="Hooton T.M."/>
            <person name="Mardis E.R."/>
            <person name="Hultgren S.J."/>
            <person name="Gordon J.I."/>
        </authorList>
    </citation>
    <scope>NUCLEOTIDE SEQUENCE [LARGE SCALE GENOMIC DNA]</scope>
    <source>
        <strain>UTI89 / UPEC</strain>
    </source>
</reference>
<name>PLSY_ECOUT</name>
<sequence>MSAIAPGMILIAYLCGSISSAILVCRLCGLPDPRTSGSGNPGATNVLRIGGKGAAVAVLIFDVLKGMLPVWGAYELGVSPFWLGLIAIAACLGHIWPVFFGFKGGKGVATAFGAIAPIGWDLTGVMAGTWLLTVLLSGYSSLGAIVSALIAPFYVWWFKPQFTFPVSMLSCLILLRHHDNIQRLWRRQETKIWTKFKRKREKDPE</sequence>
<keyword id="KW-0997">Cell inner membrane</keyword>
<keyword id="KW-1003">Cell membrane</keyword>
<keyword id="KW-0444">Lipid biosynthesis</keyword>
<keyword id="KW-0443">Lipid metabolism</keyword>
<keyword id="KW-0472">Membrane</keyword>
<keyword id="KW-0594">Phospholipid biosynthesis</keyword>
<keyword id="KW-1208">Phospholipid metabolism</keyword>
<keyword id="KW-0808">Transferase</keyword>
<keyword id="KW-0812">Transmembrane</keyword>
<keyword id="KW-1133">Transmembrane helix</keyword>
<protein>
    <recommendedName>
        <fullName evidence="1">Glycerol-3-phosphate acyltransferase</fullName>
    </recommendedName>
    <alternativeName>
        <fullName evidence="1">G3P acyltransferase</fullName>
        <shortName evidence="1">GPAT</shortName>
        <ecNumber evidence="1">2.3.1.15</ecNumber>
        <ecNumber evidence="1">2.3.1.n5</ecNumber>
    </alternativeName>
    <alternativeName>
        <fullName evidence="1">Lysophosphatidic acid synthase</fullName>
        <shortName evidence="1">LPA synthase</shortName>
    </alternativeName>
</protein>
<accession>Q1R6S2</accession>
<proteinExistence type="inferred from homology"/>
<evidence type="ECO:0000255" key="1">
    <source>
        <dbReference type="HAMAP-Rule" id="MF_01043"/>
    </source>
</evidence>
<feature type="chain" id="PRO_0000250301" description="Glycerol-3-phosphate acyltransferase">
    <location>
        <begin position="1"/>
        <end position="205"/>
    </location>
</feature>
<feature type="topological domain" description="Periplasmic" evidence="1">
    <location>
        <begin position="1"/>
        <end position="3"/>
    </location>
</feature>
<feature type="transmembrane region" description="Helical" evidence="1">
    <location>
        <begin position="4"/>
        <end position="24"/>
    </location>
</feature>
<feature type="topological domain" description="Cytoplasmic" evidence="1">
    <location>
        <begin position="25"/>
        <end position="52"/>
    </location>
</feature>
<feature type="transmembrane region" description="Helical" evidence="1">
    <location>
        <begin position="53"/>
        <end position="73"/>
    </location>
</feature>
<feature type="topological domain" description="Periplasmic" evidence="1">
    <location>
        <begin position="74"/>
        <end position="80"/>
    </location>
</feature>
<feature type="transmembrane region" description="Helical" evidence="1">
    <location>
        <begin position="81"/>
        <end position="101"/>
    </location>
</feature>
<feature type="topological domain" description="Cytoplasmic" evidence="1">
    <location>
        <begin position="102"/>
        <end position="111"/>
    </location>
</feature>
<feature type="transmembrane region" description="Helical" evidence="1">
    <location>
        <begin position="112"/>
        <end position="132"/>
    </location>
</feature>
<feature type="topological domain" description="Periplasmic" evidence="1">
    <location>
        <begin position="133"/>
        <end position="137"/>
    </location>
</feature>
<feature type="transmembrane region" description="Helical" evidence="1">
    <location>
        <begin position="138"/>
        <end position="158"/>
    </location>
</feature>
<feature type="topological domain" description="Cytoplasmic" evidence="1">
    <location>
        <begin position="159"/>
        <end position="205"/>
    </location>
</feature>
<dbReference type="EC" id="2.3.1.15" evidence="1"/>
<dbReference type="EC" id="2.3.1.n5" evidence="1"/>
<dbReference type="EMBL" id="CP000243">
    <property type="protein sequence ID" value="ABE08942.1"/>
    <property type="molecule type" value="Genomic_DNA"/>
</dbReference>
<dbReference type="RefSeq" id="WP_001272796.1">
    <property type="nucleotide sequence ID" value="NZ_CP064825.1"/>
</dbReference>
<dbReference type="SMR" id="Q1R6S2"/>
<dbReference type="GeneID" id="93778934"/>
<dbReference type="KEGG" id="eci:UTI89_C3495"/>
<dbReference type="HOGENOM" id="CLU_081254_0_2_6"/>
<dbReference type="UniPathway" id="UPA00085"/>
<dbReference type="Proteomes" id="UP000001952">
    <property type="component" value="Chromosome"/>
</dbReference>
<dbReference type="GO" id="GO:0005886">
    <property type="term" value="C:plasma membrane"/>
    <property type="evidence" value="ECO:0007669"/>
    <property type="project" value="UniProtKB-SubCell"/>
</dbReference>
<dbReference type="GO" id="GO:0043772">
    <property type="term" value="F:acyl-phosphate glycerol-3-phosphate acyltransferase activity"/>
    <property type="evidence" value="ECO:0007669"/>
    <property type="project" value="InterPro"/>
</dbReference>
<dbReference type="GO" id="GO:0004366">
    <property type="term" value="F:glycerol-3-phosphate O-acyltransferase activity"/>
    <property type="evidence" value="ECO:0007669"/>
    <property type="project" value="UniProtKB-UniRule"/>
</dbReference>
<dbReference type="GO" id="GO:0008654">
    <property type="term" value="P:phospholipid biosynthetic process"/>
    <property type="evidence" value="ECO:0007669"/>
    <property type="project" value="UniProtKB-UniRule"/>
</dbReference>
<dbReference type="HAMAP" id="MF_01043">
    <property type="entry name" value="PlsY"/>
    <property type="match status" value="1"/>
</dbReference>
<dbReference type="InterPro" id="IPR003811">
    <property type="entry name" value="G3P_acylTferase_PlsY"/>
</dbReference>
<dbReference type="NCBIfam" id="TIGR00023">
    <property type="entry name" value="glycerol-3-phosphate 1-O-acyltransferase PlsY"/>
    <property type="match status" value="1"/>
</dbReference>
<dbReference type="PANTHER" id="PTHR30309:SF0">
    <property type="entry name" value="GLYCEROL-3-PHOSPHATE ACYLTRANSFERASE-RELATED"/>
    <property type="match status" value="1"/>
</dbReference>
<dbReference type="PANTHER" id="PTHR30309">
    <property type="entry name" value="INNER MEMBRANE PROTEIN YGIH"/>
    <property type="match status" value="1"/>
</dbReference>
<dbReference type="Pfam" id="PF02660">
    <property type="entry name" value="G3P_acyltransf"/>
    <property type="match status" value="1"/>
</dbReference>
<dbReference type="SMART" id="SM01207">
    <property type="entry name" value="G3P_acyltransf"/>
    <property type="match status" value="1"/>
</dbReference>
<gene>
    <name evidence="1" type="primary">plsY</name>
    <name type="synonym">ygiH</name>
    <name type="ordered locus">UTI89_C3495</name>
</gene>
<organism>
    <name type="scientific">Escherichia coli (strain UTI89 / UPEC)</name>
    <dbReference type="NCBI Taxonomy" id="364106"/>
    <lineage>
        <taxon>Bacteria</taxon>
        <taxon>Pseudomonadati</taxon>
        <taxon>Pseudomonadota</taxon>
        <taxon>Gammaproteobacteria</taxon>
        <taxon>Enterobacterales</taxon>
        <taxon>Enterobacteriaceae</taxon>
        <taxon>Escherichia</taxon>
    </lineage>
</organism>
<comment type="function">
    <text evidence="1">Catalyzes the transfer of an acyl group from acyl-ACP to glycerol-3-phosphate (G3P) to form lysophosphatidic acid (LPA). This enzyme can also utilize acyl-CoA as fatty acyl donor, but not acyl-PO(4).</text>
</comment>
<comment type="catalytic activity">
    <reaction evidence="1">
        <text>sn-glycerol 3-phosphate + an acyl-CoA = a 1-acyl-sn-glycero-3-phosphate + CoA</text>
        <dbReference type="Rhea" id="RHEA:15325"/>
        <dbReference type="ChEBI" id="CHEBI:57287"/>
        <dbReference type="ChEBI" id="CHEBI:57597"/>
        <dbReference type="ChEBI" id="CHEBI:57970"/>
        <dbReference type="ChEBI" id="CHEBI:58342"/>
        <dbReference type="EC" id="2.3.1.15"/>
    </reaction>
</comment>
<comment type="catalytic activity">
    <reaction evidence="1">
        <text>a fatty acyl-[ACP] + sn-glycerol 3-phosphate = a 1-acyl-sn-glycero-3-phosphate + holo-[ACP]</text>
        <dbReference type="Rhea" id="RHEA:42300"/>
        <dbReference type="Rhea" id="RHEA-COMP:9685"/>
        <dbReference type="Rhea" id="RHEA-COMP:14125"/>
        <dbReference type="ChEBI" id="CHEBI:57597"/>
        <dbReference type="ChEBI" id="CHEBI:57970"/>
        <dbReference type="ChEBI" id="CHEBI:64479"/>
        <dbReference type="ChEBI" id="CHEBI:138651"/>
        <dbReference type="EC" id="2.3.1.n5"/>
    </reaction>
</comment>
<comment type="pathway">
    <text evidence="1">Lipid metabolism; phospholipid metabolism.</text>
</comment>
<comment type="subunit">
    <text evidence="1">Probably interacts with PlsX.</text>
</comment>
<comment type="subcellular location">
    <subcellularLocation>
        <location evidence="1">Cell inner membrane</location>
        <topology evidence="1">Multi-pass membrane protein</topology>
    </subcellularLocation>
</comment>
<comment type="similarity">
    <text evidence="1">Belongs to the PlsY family.</text>
</comment>